<keyword id="KW-1185">Reference proteome</keyword>
<comment type="similarity">
    <text evidence="2">Belongs to the Rv1128c/1148c/1588c/1702c/1945/3466 family.</text>
</comment>
<feature type="chain" id="PRO_0000104137" description="Uncharacterized protein Rv3466">
    <location>
        <begin position="1"/>
        <end position="222"/>
    </location>
</feature>
<feature type="region of interest" description="Disordered" evidence="1">
    <location>
        <begin position="142"/>
        <end position="222"/>
    </location>
</feature>
<feature type="compositionally biased region" description="Low complexity" evidence="1">
    <location>
        <begin position="160"/>
        <end position="169"/>
    </location>
</feature>
<feature type="compositionally biased region" description="Basic residues" evidence="1">
    <location>
        <begin position="182"/>
        <end position="196"/>
    </location>
</feature>
<reference key="1">
    <citation type="journal article" date="1998" name="Nature">
        <title>Deciphering the biology of Mycobacterium tuberculosis from the complete genome sequence.</title>
        <authorList>
            <person name="Cole S.T."/>
            <person name="Brosch R."/>
            <person name="Parkhill J."/>
            <person name="Garnier T."/>
            <person name="Churcher C.M."/>
            <person name="Harris D.E."/>
            <person name="Gordon S.V."/>
            <person name="Eiglmeier K."/>
            <person name="Gas S."/>
            <person name="Barry C.E. III"/>
            <person name="Tekaia F."/>
            <person name="Badcock K."/>
            <person name="Basham D."/>
            <person name="Brown D."/>
            <person name="Chillingworth T."/>
            <person name="Connor R."/>
            <person name="Davies R.M."/>
            <person name="Devlin K."/>
            <person name="Feltwell T."/>
            <person name="Gentles S."/>
            <person name="Hamlin N."/>
            <person name="Holroyd S."/>
            <person name="Hornsby T."/>
            <person name="Jagels K."/>
            <person name="Krogh A."/>
            <person name="McLean J."/>
            <person name="Moule S."/>
            <person name="Murphy L.D."/>
            <person name="Oliver S."/>
            <person name="Osborne J."/>
            <person name="Quail M.A."/>
            <person name="Rajandream M.A."/>
            <person name="Rogers J."/>
            <person name="Rutter S."/>
            <person name="Seeger K."/>
            <person name="Skelton S."/>
            <person name="Squares S."/>
            <person name="Squares R."/>
            <person name="Sulston J.E."/>
            <person name="Taylor K."/>
            <person name="Whitehead S."/>
            <person name="Barrell B.G."/>
        </authorList>
    </citation>
    <scope>NUCLEOTIDE SEQUENCE [LARGE SCALE GENOMIC DNA]</scope>
    <source>
        <strain>ATCC 25618 / H37Rv</strain>
    </source>
</reference>
<evidence type="ECO:0000256" key="1">
    <source>
        <dbReference type="SAM" id="MobiDB-lite"/>
    </source>
</evidence>
<evidence type="ECO:0000305" key="2"/>
<proteinExistence type="inferred from homology"/>
<accession>P9WKY1</accession>
<accession>L0TCL8</accession>
<accession>O06331</accession>
<protein>
    <recommendedName>
        <fullName>Uncharacterized protein Rv3466</fullName>
    </recommendedName>
</protein>
<dbReference type="EMBL" id="AL123456">
    <property type="protein sequence ID" value="CCP46288.1"/>
    <property type="molecule type" value="Genomic_DNA"/>
</dbReference>
<dbReference type="PIR" id="G70566">
    <property type="entry name" value="G70566"/>
</dbReference>
<dbReference type="RefSeq" id="NP_217983.1">
    <property type="nucleotide sequence ID" value="NC_000962.3"/>
</dbReference>
<dbReference type="RefSeq" id="WP_003910785.1">
    <property type="nucleotide sequence ID" value="NC_000962.3"/>
</dbReference>
<dbReference type="SMR" id="P9WKY1"/>
<dbReference type="STRING" id="83332.Rv3466"/>
<dbReference type="PaxDb" id="83332-Rv3466"/>
<dbReference type="DNASU" id="887830"/>
<dbReference type="GeneID" id="887830"/>
<dbReference type="KEGG" id="mtu:Rv3466"/>
<dbReference type="KEGG" id="mtv:RVBD_3466"/>
<dbReference type="TubercuList" id="Rv3466"/>
<dbReference type="eggNOG" id="COG1403">
    <property type="taxonomic scope" value="Bacteria"/>
</dbReference>
<dbReference type="InParanoid" id="P9WKY1"/>
<dbReference type="OrthoDB" id="4752052at2"/>
<dbReference type="PhylomeDB" id="P9WKY1"/>
<dbReference type="Proteomes" id="UP000001584">
    <property type="component" value="Chromosome"/>
</dbReference>
<dbReference type="InterPro" id="IPR003870">
    <property type="entry name" value="DUF222"/>
</dbReference>
<dbReference type="Pfam" id="PF02720">
    <property type="entry name" value="DUF222"/>
    <property type="match status" value="1"/>
</dbReference>
<sequence>MGSGSRERIVEVFDALDAELDRLDEVSFEVLTTPERLRSLERLECLVRRLPAVGHALINQLDAQASEEELGGTLCCALANRLRITKPDAARRIADAADLGPRRALTGEPLAPQLTATATAQRQGLIGEAHVKVIRALFRPPARRGGCVHPPGRRSRPGRQSRSISSRRAGPLRPAGHGLATPRRRPHRHRTRPQTRHHPEQPAIRRHVTAKWLPDPPSAGHL</sequence>
<organism>
    <name type="scientific">Mycobacterium tuberculosis (strain ATCC 25618 / H37Rv)</name>
    <dbReference type="NCBI Taxonomy" id="83332"/>
    <lineage>
        <taxon>Bacteria</taxon>
        <taxon>Bacillati</taxon>
        <taxon>Actinomycetota</taxon>
        <taxon>Actinomycetes</taxon>
        <taxon>Mycobacteriales</taxon>
        <taxon>Mycobacteriaceae</taxon>
        <taxon>Mycobacterium</taxon>
        <taxon>Mycobacterium tuberculosis complex</taxon>
    </lineage>
</organism>
<name>Y3466_MYCTU</name>
<gene>
    <name type="ordered locus">Rv3466</name>
    <name type="ORF">MTCY13E12.19</name>
</gene>